<feature type="chain" id="PRO_0000126144" description="Large ribosomal subunit protein bL36">
    <location>
        <begin position="1"/>
        <end position="37"/>
    </location>
</feature>
<protein>
    <recommendedName>
        <fullName evidence="1">Large ribosomal subunit protein bL36</fullName>
    </recommendedName>
    <alternativeName>
        <fullName evidence="2">50S ribosomal protein L36</fullName>
    </alternativeName>
</protein>
<comment type="similarity">
    <text evidence="1">Belongs to the bacterial ribosomal protein bL36 family.</text>
</comment>
<dbReference type="EMBL" id="AE016877">
    <property type="protein sequence ID" value="AAP07235.1"/>
    <property type="molecule type" value="Genomic_DNA"/>
</dbReference>
<dbReference type="RefSeq" id="NP_830034.1">
    <property type="nucleotide sequence ID" value="NC_004722.1"/>
</dbReference>
<dbReference type="RefSeq" id="WP_000868344.1">
    <property type="nucleotide sequence ID" value="NZ_CP138336.1"/>
</dbReference>
<dbReference type="SMR" id="Q81J20"/>
<dbReference type="STRING" id="226900.BC_0155"/>
<dbReference type="GeneID" id="97822099"/>
<dbReference type="KEGG" id="bce:BC0155"/>
<dbReference type="PATRIC" id="fig|226900.8.peg.157"/>
<dbReference type="HOGENOM" id="CLU_135723_6_2_9"/>
<dbReference type="OrthoDB" id="9802520at2"/>
<dbReference type="PRO" id="PR:Q81J20"/>
<dbReference type="Proteomes" id="UP000001417">
    <property type="component" value="Chromosome"/>
</dbReference>
<dbReference type="GO" id="GO:0005737">
    <property type="term" value="C:cytoplasm"/>
    <property type="evidence" value="ECO:0007669"/>
    <property type="project" value="UniProtKB-ARBA"/>
</dbReference>
<dbReference type="GO" id="GO:1990904">
    <property type="term" value="C:ribonucleoprotein complex"/>
    <property type="evidence" value="ECO:0007669"/>
    <property type="project" value="UniProtKB-KW"/>
</dbReference>
<dbReference type="GO" id="GO:0005840">
    <property type="term" value="C:ribosome"/>
    <property type="evidence" value="ECO:0007669"/>
    <property type="project" value="UniProtKB-KW"/>
</dbReference>
<dbReference type="GO" id="GO:0003735">
    <property type="term" value="F:structural constituent of ribosome"/>
    <property type="evidence" value="ECO:0007669"/>
    <property type="project" value="InterPro"/>
</dbReference>
<dbReference type="GO" id="GO:0006412">
    <property type="term" value="P:translation"/>
    <property type="evidence" value="ECO:0007669"/>
    <property type="project" value="UniProtKB-UniRule"/>
</dbReference>
<dbReference type="HAMAP" id="MF_00251">
    <property type="entry name" value="Ribosomal_bL36"/>
    <property type="match status" value="1"/>
</dbReference>
<dbReference type="InterPro" id="IPR000473">
    <property type="entry name" value="Ribosomal_bL36"/>
</dbReference>
<dbReference type="InterPro" id="IPR035977">
    <property type="entry name" value="Ribosomal_bL36_sp"/>
</dbReference>
<dbReference type="NCBIfam" id="TIGR01022">
    <property type="entry name" value="rpmJ_bact"/>
    <property type="match status" value="1"/>
</dbReference>
<dbReference type="PANTHER" id="PTHR42888">
    <property type="entry name" value="50S RIBOSOMAL PROTEIN L36, CHLOROPLASTIC"/>
    <property type="match status" value="1"/>
</dbReference>
<dbReference type="PANTHER" id="PTHR42888:SF1">
    <property type="entry name" value="LARGE RIBOSOMAL SUBUNIT PROTEIN BL36C"/>
    <property type="match status" value="1"/>
</dbReference>
<dbReference type="Pfam" id="PF00444">
    <property type="entry name" value="Ribosomal_L36"/>
    <property type="match status" value="1"/>
</dbReference>
<dbReference type="SUPFAM" id="SSF57840">
    <property type="entry name" value="Ribosomal protein L36"/>
    <property type="match status" value="1"/>
</dbReference>
<dbReference type="PROSITE" id="PS00828">
    <property type="entry name" value="RIBOSOMAL_L36"/>
    <property type="match status" value="1"/>
</dbReference>
<proteinExistence type="inferred from homology"/>
<keyword id="KW-1185">Reference proteome</keyword>
<keyword id="KW-0687">Ribonucleoprotein</keyword>
<keyword id="KW-0689">Ribosomal protein</keyword>
<accession>Q81J20</accession>
<organism>
    <name type="scientific">Bacillus cereus (strain ATCC 14579 / DSM 31 / CCUG 7414 / JCM 2152 / NBRC 15305 / NCIMB 9373 / NCTC 2599 / NRRL B-3711)</name>
    <dbReference type="NCBI Taxonomy" id="226900"/>
    <lineage>
        <taxon>Bacteria</taxon>
        <taxon>Bacillati</taxon>
        <taxon>Bacillota</taxon>
        <taxon>Bacilli</taxon>
        <taxon>Bacillales</taxon>
        <taxon>Bacillaceae</taxon>
        <taxon>Bacillus</taxon>
        <taxon>Bacillus cereus group</taxon>
    </lineage>
</organism>
<reference key="1">
    <citation type="journal article" date="2003" name="Nature">
        <title>Genome sequence of Bacillus cereus and comparative analysis with Bacillus anthracis.</title>
        <authorList>
            <person name="Ivanova N."/>
            <person name="Sorokin A."/>
            <person name="Anderson I."/>
            <person name="Galleron N."/>
            <person name="Candelon B."/>
            <person name="Kapatral V."/>
            <person name="Bhattacharyya A."/>
            <person name="Reznik G."/>
            <person name="Mikhailova N."/>
            <person name="Lapidus A."/>
            <person name="Chu L."/>
            <person name="Mazur M."/>
            <person name="Goltsman E."/>
            <person name="Larsen N."/>
            <person name="D'Souza M."/>
            <person name="Walunas T."/>
            <person name="Grechkin Y."/>
            <person name="Pusch G."/>
            <person name="Haselkorn R."/>
            <person name="Fonstein M."/>
            <person name="Ehrlich S.D."/>
            <person name="Overbeek R."/>
            <person name="Kyrpides N.C."/>
        </authorList>
    </citation>
    <scope>NUCLEOTIDE SEQUENCE [LARGE SCALE GENOMIC DNA]</scope>
    <source>
        <strain>ATCC 14579 / DSM 31 / CCUG 7414 / JCM 2152 / NBRC 15305 / NCIMB 9373 / NCTC 2599 / NRRL B-3711</strain>
    </source>
</reference>
<name>RL36_BACCR</name>
<gene>
    <name evidence="1" type="primary">rpmJ</name>
    <name type="ordered locus">BC_0155</name>
</gene>
<sequence length="37" mass="4333">MKVRPSVKPICEKCKVIRRRGKVMVICENPKHKQKQG</sequence>
<evidence type="ECO:0000255" key="1">
    <source>
        <dbReference type="HAMAP-Rule" id="MF_00251"/>
    </source>
</evidence>
<evidence type="ECO:0000305" key="2"/>